<reference key="1">
    <citation type="journal article" date="1984" name="Int. J. Biol. Macromol.">
        <title>A structural model for ovine rhodopsin.</title>
        <authorList>
            <person name="Pappin D.J.C."/>
            <person name="Elipoulos E."/>
            <person name="Brett M."/>
            <person name="Findlay J.B.C."/>
        </authorList>
    </citation>
    <scope>PROTEIN SEQUENCE</scope>
</reference>
<reference key="2">
    <citation type="journal article" date="1983" name="Biochem. J.">
        <title>Isolation and characterization of the CNBr peptides from the proteolytically derived N-terminal fragment of ovine opsin.</title>
        <authorList>
            <person name="Brett M."/>
            <person name="Findlay J.B.C."/>
        </authorList>
    </citation>
    <scope>PROTEIN SEQUENCE OF 1-111 AND 144-239</scope>
</reference>
<reference key="3">
    <citation type="journal article" date="1981" name="Nature">
        <title>Primary structure of C-terminal functional sites in ovine rhodopsin.</title>
        <authorList>
            <person name="Findlay J.B.C."/>
            <person name="Brett M."/>
            <person name="Pappin D.J.C."/>
        </authorList>
    </citation>
    <scope>PROTEIN SEQUENCE OF 240-348</scope>
    <scope>SUBCELLULAR LOCATION</scope>
    <scope>RETINAL-BINDING SITE</scope>
</reference>
<reference key="4">
    <citation type="journal article" date="1984" name="Biochem. J.">
        <title>Sequence variability in the retinal-attachment domain of mammalian rhodopsins.</title>
        <authorList>
            <person name="Pappin D.J.C."/>
            <person name="Findlay J.B.C."/>
        </authorList>
    </citation>
    <scope>RETINAL-BINDING SITE AT LYS-296</scope>
</reference>
<reference key="5">
    <citation type="journal article" date="1984" name="Biochem. J.">
        <title>Phosphorylation of ovine rhodopsin. Identification of the phosphorylated sites.</title>
        <authorList>
            <person name="Thompson P."/>
            <person name="Findlay J.B.C."/>
        </authorList>
    </citation>
    <scope>PHOSPHORYLATION AT SER-334; THR-335; THR-336; SER-338 AND SER-343</scope>
    <scope>SUBCELLULAR LOCATION</scope>
</reference>
<comment type="function">
    <text evidence="1 2">Photoreceptor required for image-forming vision at low light intensity. Required for photoreceptor cell viability after birth (By similarity). Light-induced isomerization of 11-cis to all-trans retinal triggers a conformational change that activates signaling via G-proteins. Subsequent receptor phosphorylation mediates displacement of the bound G-protein alpha subunit by the arrestin SAG and terminates signaling (By similarity).</text>
</comment>
<comment type="subunit">
    <text evidence="1 2 3">Homodimer. May form a complex composed of RHO, GRK1 and RCVRN in a Ca(2+)-dependent manner; RCVRN prevents the interaction between GRK1 and RHO (By similarity). Interacts with GRK1 (By similarity). Interacts (phosphorylated form) with SAG (By similarity). Interacts with GNAT1 (By similarity). Interacts with GNAT3. SAG and G-proteins compete for a common binding site (By similarity). Interacts with PRCD; the interaction promotes PRCD stability (By similarity). Forms a complex with ASAP1 and ARF4. Forms a complex with ASAP1, RAB11A, Rabin8/RAB3IP, ARF4 and RAB11FIP3; the complex regulates Golgi-to-cilia rhodopsin/RHO transport in photoreceptors (By similarity).</text>
</comment>
<comment type="subcellular location">
    <subcellularLocation>
        <location evidence="7 8">Membrane</location>
        <topology evidence="7 8">Multi-pass membrane protein</topology>
    </subcellularLocation>
    <subcellularLocation>
        <location evidence="7 8">Cell projection</location>
        <location evidence="7 8">Cilium</location>
        <location evidence="7 8">Photoreceptor outer segment</location>
    </subcellularLocation>
    <text evidence="2">Synthesized in the inner segment (IS) of rod photoreceptor cells before vectorial transport to disk membranes in the rod outer segment (OS) photosensory cilia.</text>
</comment>
<comment type="PTM">
    <text evidence="7">Phosphorylated on some or all of the serine and threonine residues present in the C-terminal region.</text>
</comment>
<comment type="PTM">
    <text evidence="1 6 8">Contains one covalently linked retinal chromophore (PubMed:6370231, PubMed:7278988). Upon light absorption, the covalently bound 11-cis-retinal is converted to all-trans-retinal. After hydrolysis of the Schiff base and release of the covalently bound all-trans-retinal, active rhodopsin is regenerated by binding of a fresh molecule of 11-cis-retinal (By similarity).</text>
</comment>
<comment type="similarity">
    <text evidence="5">Belongs to the G-protein coupled receptor 1 family. Opsin subfamily.</text>
</comment>
<sequence>MNGTEGPNFYVPFSNKTGVVRSPFEAPQYYLAEPWQFSMLAAYMFLLIVLGFPINFLTLYVTVQHKKLRTPLNYILLNLAVADLFMVFGGFTTTLYTSLHGYFVFGPTGCNLEGFFATLGGEIALWSLVVLAIERYVVVCKPMSNFRFGENHAIMGVAFTWVMALACAAPPLVGWSRYIPQGMQCSCGALYFTLKPEINNESFVIYMFVVHFSIPLIVIFFCYGQLVFTVKEAAAQQQESATTQKAEKEVTRMVIIMVIAFLICWLPYAGVAFYIFTHQGSDFGPIFMTIPAFFAKSSSVYNPVIYIMMNKQFRNCMLTTLCCGKNPLGDDEASTTVSKTETSQVAPA</sequence>
<dbReference type="PIR" id="A30407">
    <property type="entry name" value="OOSH"/>
</dbReference>
<dbReference type="BMRB" id="P02700"/>
<dbReference type="SMR" id="P02700"/>
<dbReference type="STRING" id="9940.ENSOARP00000015330"/>
<dbReference type="GlyCosmos" id="P02700">
    <property type="glycosylation" value="2 sites, No reported glycans"/>
</dbReference>
<dbReference type="iPTMnet" id="P02700"/>
<dbReference type="PaxDb" id="9940-ENSOARP00000015330"/>
<dbReference type="eggNOG" id="KOG3656">
    <property type="taxonomic scope" value="Eukaryota"/>
</dbReference>
<dbReference type="Proteomes" id="UP000002356">
    <property type="component" value="Unplaced"/>
</dbReference>
<dbReference type="GO" id="GO:0016020">
    <property type="term" value="C:membrane"/>
    <property type="evidence" value="ECO:0000250"/>
    <property type="project" value="UniProtKB"/>
</dbReference>
<dbReference type="GO" id="GO:0097381">
    <property type="term" value="C:photoreceptor disc membrane"/>
    <property type="evidence" value="ECO:0000250"/>
    <property type="project" value="UniProtKB"/>
</dbReference>
<dbReference type="GO" id="GO:0060342">
    <property type="term" value="C:photoreceptor inner segment membrane"/>
    <property type="evidence" value="ECO:0000250"/>
    <property type="project" value="UniProtKB"/>
</dbReference>
<dbReference type="GO" id="GO:0042622">
    <property type="term" value="C:photoreceptor outer segment membrane"/>
    <property type="evidence" value="ECO:0000250"/>
    <property type="project" value="UniProtKB"/>
</dbReference>
<dbReference type="GO" id="GO:0005886">
    <property type="term" value="C:plasma membrane"/>
    <property type="evidence" value="ECO:0000250"/>
    <property type="project" value="UniProtKB"/>
</dbReference>
<dbReference type="GO" id="GO:0005502">
    <property type="term" value="F:11-cis retinal binding"/>
    <property type="evidence" value="ECO:0000250"/>
    <property type="project" value="UniProtKB"/>
</dbReference>
<dbReference type="GO" id="GO:0008020">
    <property type="term" value="F:G protein-coupled photoreceptor activity"/>
    <property type="evidence" value="ECO:0000250"/>
    <property type="project" value="UniProtKB"/>
</dbReference>
<dbReference type="GO" id="GO:0046872">
    <property type="term" value="F:metal ion binding"/>
    <property type="evidence" value="ECO:0007669"/>
    <property type="project" value="UniProtKB-KW"/>
</dbReference>
<dbReference type="GO" id="GO:0016038">
    <property type="term" value="P:absorption of visible light"/>
    <property type="evidence" value="ECO:0000250"/>
    <property type="project" value="AgBase"/>
</dbReference>
<dbReference type="GO" id="GO:0016056">
    <property type="term" value="P:G protein-coupled opsin signaling pathway"/>
    <property type="evidence" value="ECO:0000250"/>
    <property type="project" value="UniProtKB"/>
</dbReference>
<dbReference type="GO" id="GO:0007601">
    <property type="term" value="P:visual perception"/>
    <property type="evidence" value="ECO:0007669"/>
    <property type="project" value="UniProtKB-KW"/>
</dbReference>
<dbReference type="CDD" id="cd15080">
    <property type="entry name" value="7tmA_MWS_opsin"/>
    <property type="match status" value="1"/>
</dbReference>
<dbReference type="FunFam" id="1.20.1070.10:FF:000018">
    <property type="entry name" value="Rhodopsin"/>
    <property type="match status" value="1"/>
</dbReference>
<dbReference type="Gene3D" id="1.20.1070.10">
    <property type="entry name" value="Rhodopsin 7-helix transmembrane proteins"/>
    <property type="match status" value="1"/>
</dbReference>
<dbReference type="InterPro" id="IPR050125">
    <property type="entry name" value="GPCR_opsins"/>
</dbReference>
<dbReference type="InterPro" id="IPR000276">
    <property type="entry name" value="GPCR_Rhodpsn"/>
</dbReference>
<dbReference type="InterPro" id="IPR017452">
    <property type="entry name" value="GPCR_Rhodpsn_7TM"/>
</dbReference>
<dbReference type="InterPro" id="IPR001760">
    <property type="entry name" value="Opsin"/>
</dbReference>
<dbReference type="InterPro" id="IPR027430">
    <property type="entry name" value="Retinal_BS"/>
</dbReference>
<dbReference type="InterPro" id="IPR000732">
    <property type="entry name" value="Rhodopsin"/>
</dbReference>
<dbReference type="InterPro" id="IPR019477">
    <property type="entry name" value="Rhodopsin_N"/>
</dbReference>
<dbReference type="PANTHER" id="PTHR24240">
    <property type="entry name" value="OPSIN"/>
    <property type="match status" value="1"/>
</dbReference>
<dbReference type="Pfam" id="PF00001">
    <property type="entry name" value="7tm_1"/>
    <property type="match status" value="1"/>
</dbReference>
<dbReference type="Pfam" id="PF10413">
    <property type="entry name" value="Rhodopsin_N"/>
    <property type="match status" value="1"/>
</dbReference>
<dbReference type="PRINTS" id="PR00237">
    <property type="entry name" value="GPCRRHODOPSN"/>
</dbReference>
<dbReference type="PRINTS" id="PR00238">
    <property type="entry name" value="OPSIN"/>
</dbReference>
<dbReference type="PRINTS" id="PR00579">
    <property type="entry name" value="RHODOPSIN"/>
</dbReference>
<dbReference type="SMART" id="SM01381">
    <property type="entry name" value="7TM_GPCR_Srsx"/>
    <property type="match status" value="1"/>
</dbReference>
<dbReference type="SUPFAM" id="SSF81321">
    <property type="entry name" value="Family A G protein-coupled receptor-like"/>
    <property type="match status" value="1"/>
</dbReference>
<dbReference type="PROSITE" id="PS00237">
    <property type="entry name" value="G_PROTEIN_RECEP_F1_1"/>
    <property type="match status" value="1"/>
</dbReference>
<dbReference type="PROSITE" id="PS50262">
    <property type="entry name" value="G_PROTEIN_RECEP_F1_2"/>
    <property type="match status" value="1"/>
</dbReference>
<dbReference type="PROSITE" id="PS00238">
    <property type="entry name" value="OPSIN"/>
    <property type="match status" value="1"/>
</dbReference>
<organism>
    <name type="scientific">Ovis aries</name>
    <name type="common">Sheep</name>
    <dbReference type="NCBI Taxonomy" id="9940"/>
    <lineage>
        <taxon>Eukaryota</taxon>
        <taxon>Metazoa</taxon>
        <taxon>Chordata</taxon>
        <taxon>Craniata</taxon>
        <taxon>Vertebrata</taxon>
        <taxon>Euteleostomi</taxon>
        <taxon>Mammalia</taxon>
        <taxon>Eutheria</taxon>
        <taxon>Laurasiatheria</taxon>
        <taxon>Artiodactyla</taxon>
        <taxon>Ruminantia</taxon>
        <taxon>Pecora</taxon>
        <taxon>Bovidae</taxon>
        <taxon>Caprinae</taxon>
        <taxon>Ovis</taxon>
    </lineage>
</organism>
<feature type="chain" id="PRO_0000197719" description="Rhodopsin">
    <location>
        <begin position="1"/>
        <end position="348"/>
    </location>
</feature>
<feature type="topological domain" description="Extracellular" evidence="9">
    <location>
        <begin position="1"/>
        <end position="36"/>
    </location>
</feature>
<feature type="transmembrane region" description="Helical; Name=1" evidence="1">
    <location>
        <begin position="37"/>
        <end position="61"/>
    </location>
</feature>
<feature type="topological domain" description="Cytoplasmic" evidence="9">
    <location>
        <begin position="62"/>
        <end position="73"/>
    </location>
</feature>
<feature type="transmembrane region" description="Helical; Name=2" evidence="1">
    <location>
        <begin position="74"/>
        <end position="96"/>
    </location>
</feature>
<feature type="topological domain" description="Extracellular" evidence="9">
    <location>
        <begin position="97"/>
        <end position="110"/>
    </location>
</feature>
<feature type="transmembrane region" description="Helical; Name=3" evidence="1">
    <location>
        <begin position="111"/>
        <end position="133"/>
    </location>
</feature>
<feature type="topological domain" description="Cytoplasmic" evidence="9">
    <location>
        <begin position="134"/>
        <end position="152"/>
    </location>
</feature>
<feature type="transmembrane region" description="Helical; Name=4" evidence="1">
    <location>
        <begin position="153"/>
        <end position="173"/>
    </location>
</feature>
<feature type="topological domain" description="Extracellular" evidence="9">
    <location>
        <begin position="174"/>
        <end position="202"/>
    </location>
</feature>
<feature type="transmembrane region" description="Helical; Name=5" evidence="1">
    <location>
        <begin position="203"/>
        <end position="224"/>
    </location>
</feature>
<feature type="topological domain" description="Cytoplasmic" evidence="9">
    <location>
        <begin position="225"/>
        <end position="252"/>
    </location>
</feature>
<feature type="transmembrane region" description="Helical; Name=6" evidence="1">
    <location>
        <begin position="253"/>
        <end position="274"/>
    </location>
</feature>
<feature type="topological domain" description="Extracellular" evidence="9">
    <location>
        <begin position="275"/>
        <end position="286"/>
    </location>
</feature>
<feature type="transmembrane region" description="Helical; Name=7" evidence="1">
    <location>
        <begin position="287"/>
        <end position="308"/>
    </location>
</feature>
<feature type="topological domain" description="Cytoplasmic" evidence="9">
    <location>
        <begin position="309"/>
        <end position="348"/>
    </location>
</feature>
<feature type="region of interest" description="Interaction with SAG" evidence="1">
    <location>
        <begin position="330"/>
        <end position="348"/>
    </location>
</feature>
<feature type="short sequence motif" description="'Ionic lock' involved in activated form stabilization" evidence="1">
    <location>
        <begin position="134"/>
        <end position="136"/>
    </location>
</feature>
<feature type="binding site" evidence="1">
    <location>
        <position position="201"/>
    </location>
    <ligand>
        <name>Zn(2+)</name>
        <dbReference type="ChEBI" id="CHEBI:29105"/>
    </ligand>
</feature>
<feature type="binding site" evidence="1">
    <location>
        <position position="279"/>
    </location>
    <ligand>
        <name>Zn(2+)</name>
        <dbReference type="ChEBI" id="CHEBI:29105"/>
    </ligand>
</feature>
<feature type="site" description="Plays an important role in the conformation switch to the active conformation" evidence="1">
    <location>
        <position position="113"/>
    </location>
</feature>
<feature type="modified residue" description="N-acetylmethionine" evidence="1">
    <location>
        <position position="1"/>
    </location>
</feature>
<feature type="modified residue" description="N6-(retinylidene)lysine" evidence="6 10">
    <location>
        <position position="296"/>
    </location>
</feature>
<feature type="modified residue" description="Phosphoserine" evidence="7">
    <location>
        <position position="334"/>
    </location>
</feature>
<feature type="modified residue" description="Phosphoserine; by RK and GRK7" evidence="7">
    <location>
        <position position="334"/>
    </location>
</feature>
<feature type="modified residue" description="Phosphothreonine" evidence="7">
    <location>
        <position position="335"/>
    </location>
</feature>
<feature type="modified residue" description="Phosphothreonine; by RK and GRK7" evidence="7">
    <location>
        <position position="335"/>
    </location>
</feature>
<feature type="modified residue" description="Phosphothreonine" evidence="7">
    <location>
        <position position="336"/>
    </location>
</feature>
<feature type="modified residue" description="Phosphothreonine; by RK and GRK7" evidence="7">
    <location>
        <position position="336"/>
    </location>
</feature>
<feature type="modified residue" description="Phosphoserine; by RK and GRK7" evidence="7">
    <location>
        <position position="338"/>
    </location>
</feature>
<feature type="modified residue" description="Phosphothreonine" evidence="1">
    <location>
        <position position="340"/>
    </location>
</feature>
<feature type="modified residue" description="Phosphothreonine" evidence="1">
    <location>
        <position position="342"/>
    </location>
</feature>
<feature type="modified residue" description="Phosphoserine; by RK and GRK7" evidence="7">
    <location>
        <position position="343"/>
    </location>
</feature>
<feature type="lipid moiety-binding region" description="S-palmitoyl cysteine" evidence="1">
    <location>
        <position position="322"/>
    </location>
</feature>
<feature type="lipid moiety-binding region" description="S-palmitoyl cysteine" evidence="1">
    <location>
        <position position="323"/>
    </location>
</feature>
<feature type="glycosylation site" description="N-linked (GlcNAc...) asparagine" evidence="4">
    <location>
        <position position="2"/>
    </location>
</feature>
<feature type="glycosylation site" description="N-linked (GlcNAc...) asparagine" evidence="4">
    <location>
        <position position="15"/>
    </location>
</feature>
<feature type="disulfide bond" evidence="5">
    <location>
        <begin position="110"/>
        <end position="187"/>
    </location>
</feature>
<keyword id="KW-0007">Acetylation</keyword>
<keyword id="KW-0966">Cell projection</keyword>
<keyword id="KW-0157">Chromophore</keyword>
<keyword id="KW-0903">Direct protein sequencing</keyword>
<keyword id="KW-1015">Disulfide bond</keyword>
<keyword id="KW-0297">G-protein coupled receptor</keyword>
<keyword id="KW-0325">Glycoprotein</keyword>
<keyword id="KW-0449">Lipoprotein</keyword>
<keyword id="KW-0472">Membrane</keyword>
<keyword id="KW-0479">Metal-binding</keyword>
<keyword id="KW-0564">Palmitate</keyword>
<keyword id="KW-0597">Phosphoprotein</keyword>
<keyword id="KW-0600">Photoreceptor protein</keyword>
<keyword id="KW-0675">Receptor</keyword>
<keyword id="KW-1185">Reference proteome</keyword>
<keyword id="KW-0681">Retinal protein</keyword>
<keyword id="KW-0716">Sensory transduction</keyword>
<keyword id="KW-0807">Transducer</keyword>
<keyword id="KW-0812">Transmembrane</keyword>
<keyword id="KW-1133">Transmembrane helix</keyword>
<keyword id="KW-0844">Vision</keyword>
<keyword id="KW-0862">Zinc</keyword>
<evidence type="ECO:0000250" key="1">
    <source>
        <dbReference type="UniProtKB" id="P02699"/>
    </source>
</evidence>
<evidence type="ECO:0000250" key="2">
    <source>
        <dbReference type="UniProtKB" id="P08100"/>
    </source>
</evidence>
<evidence type="ECO:0000250" key="3">
    <source>
        <dbReference type="UniProtKB" id="P15409"/>
    </source>
</evidence>
<evidence type="ECO:0000255" key="4"/>
<evidence type="ECO:0000255" key="5">
    <source>
        <dbReference type="PROSITE-ProRule" id="PRU00521"/>
    </source>
</evidence>
<evidence type="ECO:0000269" key="6">
    <source>
    </source>
</evidence>
<evidence type="ECO:0000269" key="7">
    <source>
    </source>
</evidence>
<evidence type="ECO:0000269" key="8">
    <source>
    </source>
</evidence>
<evidence type="ECO:0000305" key="9"/>
<evidence type="ECO:0000305" key="10">
    <source>
    </source>
</evidence>
<accession>P02700</accession>
<proteinExistence type="evidence at protein level"/>
<protein>
    <recommendedName>
        <fullName>Rhodopsin</fullName>
    </recommendedName>
</protein>
<gene>
    <name type="primary">RHO</name>
</gene>
<name>OPSD_SHEEP</name>